<reference key="1">
    <citation type="thesis" date="1996" institute="Cornell University" country="United States">
        <title>The biosynthesis of thiamin in Escherichia coli K-12: structural genes for thiamin biosynthetic enzymes (thiCEFGH and thiJ) and function of the thiE gene product (thiamin phosphate synthase [E.C. 2.5.1.3]).</title>
        <authorList>
            <person name="Backstrom A.D."/>
        </authorList>
    </citation>
    <scope>NUCLEOTIDE SEQUENCE [GENOMIC DNA]</scope>
    <source>
        <strain>K12</strain>
    </source>
</reference>
<reference key="2">
    <citation type="submission" date="1997-01" db="EMBL/GenBank/DDBJ databases">
        <title>Sequence of minutes 4-25 of Escherichia coli.</title>
        <authorList>
            <person name="Chung E."/>
            <person name="Allen E."/>
            <person name="Araujo R."/>
            <person name="Aparicio A.M."/>
            <person name="Davis K."/>
            <person name="Duncan M."/>
            <person name="Federspiel N."/>
            <person name="Hyman R."/>
            <person name="Kalman S."/>
            <person name="Komp C."/>
            <person name="Kurdi O."/>
            <person name="Lew H."/>
            <person name="Lin D."/>
            <person name="Namath A."/>
            <person name="Oefner P."/>
            <person name="Roberts D."/>
            <person name="Schramm S."/>
            <person name="Davis R.W."/>
        </authorList>
    </citation>
    <scope>NUCLEOTIDE SEQUENCE [LARGE SCALE GENOMIC DNA]</scope>
    <source>
        <strain>K12 / MG1655 / ATCC 47076</strain>
    </source>
</reference>
<reference key="3">
    <citation type="journal article" date="1997" name="Science">
        <title>The complete genome sequence of Escherichia coli K-12.</title>
        <authorList>
            <person name="Blattner F.R."/>
            <person name="Plunkett G. III"/>
            <person name="Bloch C.A."/>
            <person name="Perna N.T."/>
            <person name="Burland V."/>
            <person name="Riley M."/>
            <person name="Collado-Vides J."/>
            <person name="Glasner J.D."/>
            <person name="Rode C.K."/>
            <person name="Mayhew G.F."/>
            <person name="Gregor J."/>
            <person name="Davis N.W."/>
            <person name="Kirkpatrick H.A."/>
            <person name="Goeden M.A."/>
            <person name="Rose D.J."/>
            <person name="Mau B."/>
            <person name="Shao Y."/>
        </authorList>
    </citation>
    <scope>NUCLEOTIDE SEQUENCE [LARGE SCALE GENOMIC DNA]</scope>
    <source>
        <strain>K12 / MG1655 / ATCC 47076</strain>
    </source>
</reference>
<reference key="4">
    <citation type="journal article" date="2006" name="Mol. Syst. Biol.">
        <title>Highly accurate genome sequences of Escherichia coli K-12 strains MG1655 and W3110.</title>
        <authorList>
            <person name="Hayashi K."/>
            <person name="Morooka N."/>
            <person name="Yamamoto Y."/>
            <person name="Fujita K."/>
            <person name="Isono K."/>
            <person name="Choi S."/>
            <person name="Ohtsubo E."/>
            <person name="Baba T."/>
            <person name="Wanner B.L."/>
            <person name="Mori H."/>
            <person name="Horiuchi T."/>
        </authorList>
    </citation>
    <scope>NUCLEOTIDE SEQUENCE [LARGE SCALE GENOMIC DNA]</scope>
    <source>
        <strain>K12 / W3110 / ATCC 27325 / DSM 5911</strain>
    </source>
</reference>
<reference key="5">
    <citation type="journal article" date="1998" name="Nucleic Acids Res.">
        <title>Identification of a gene involved in the generation of 4-thiouridine in tRNA.</title>
        <authorList>
            <person name="Mueller E.G."/>
            <person name="Buck C.J."/>
            <person name="Palenchar P.M."/>
            <person name="Barnhart L.E."/>
            <person name="Paulson J.L."/>
        </authorList>
    </citation>
    <scope>ABSENCE OF FUNCTION IN THIAMINE BIOSYNTHESIS</scope>
</reference>
<reference key="6">
    <citation type="journal article" date="2010" name="J. Bacteriol.">
        <title>Translational defects in a mutant deficient in YajL, the bacterial homolog of the parkinsonism-associated protein DJ-1.</title>
        <authorList>
            <person name="Kthiri F."/>
            <person name="Gautier V."/>
            <person name="Le H.T."/>
            <person name="Prere M.F."/>
            <person name="Fayet O."/>
            <person name="Malki A."/>
            <person name="Landoulsi A."/>
            <person name="Richarme G."/>
        </authorList>
    </citation>
    <scope>FUNCTION</scope>
    <scope>DISRUPTION PHENOTYPE</scope>
    <source>
        <strain>K12 / BW25113</strain>
    </source>
</reference>
<reference key="7">
    <citation type="journal article" date="2010" name="J. Biol. Chem.">
        <title>Protein aggregation in a mutant deficient in yajL, the bacterial homolog of the Parkinsonism-associated protein DJ-1.</title>
        <authorList>
            <person name="Kthiri F."/>
            <person name="Le H.T."/>
            <person name="Gautier V."/>
            <person name="Caldas T."/>
            <person name="Malki A."/>
            <person name="Landoulsi A."/>
            <person name="Bohn C."/>
            <person name="Bouloc P."/>
            <person name="Richarme G."/>
        </authorList>
    </citation>
    <scope>FUNCTION AS A CHAPERONE</scope>
    <scope>ACTIVITY REGULATION</scope>
    <scope>DISRUPTION PHENOTYPE</scope>
    <scope>MUTAGENESIS OF CYS-106</scope>
    <source>
        <strain>K12 / BW25113</strain>
    </source>
</reference>
<reference key="8">
    <citation type="journal article" date="2012" name="J. Biol. Chem.">
        <title>YajL, prokaryotic homolog of parkinsonism-associated protein DJ-1, functions as a covalent chaperone for thiol proteome.</title>
        <authorList>
            <person name="Le H.T."/>
            <person name="Gautier V."/>
            <person name="Kthiri F."/>
            <person name="Malki A."/>
            <person name="Messaoudi N."/>
            <person name="Mihoub M."/>
            <person name="Landoulsi A."/>
            <person name="An Y.J."/>
            <person name="Cha S.S."/>
            <person name="Richarme G."/>
        </authorList>
    </citation>
    <scope>FUNCTION AS A CHAPERONE</scope>
    <scope>SUBUNIT</scope>
    <scope>MUTAGENESIS OF CYS-47 AND CYS-106</scope>
</reference>
<reference key="9">
    <citation type="journal article" date="2012" name="J. Mol. Biol.">
        <title>YajL, the prokaryotic homolog of the Parkinsonism-associated protein DJ-1, protects cells against protein sulfenylation.</title>
        <authorList>
            <person name="Gautier V."/>
            <person name="Le H.T."/>
            <person name="Malki A."/>
            <person name="Messaoudi N."/>
            <person name="Caldas T."/>
            <person name="Kthiri F."/>
            <person name="Landoulsi A."/>
            <person name="Richarme G."/>
        </authorList>
    </citation>
    <scope>FUNCTION AS A CHAPERONE</scope>
    <scope>DISRUPTION PHENOTYPE</scope>
    <scope>MUTAGENESIS OF CYS-47 AND CYS-106</scope>
</reference>
<reference key="10">
    <citation type="journal article" date="2015" name="J. Biol. Chem.">
        <title>Parkinsonism-associated protein DJ-1/Park7 is a major protein deglycase that repairs methylglyoxal- and glyoxal-glycated cysteine, arginine and lysine residues.</title>
        <authorList>
            <person name="Richarme G."/>
            <person name="Mihoub M."/>
            <person name="Dairou J."/>
            <person name="Bui L.C."/>
            <person name="Leger T."/>
            <person name="Lamouri A."/>
        </authorList>
    </citation>
    <scope>FUNCTION IN DEGLYCATION</scope>
    <scope>DISRUPTION PHENOTYPE</scope>
</reference>
<reference key="11">
    <citation type="journal article" date="2015" name="Microbiology">
        <title>Fermentation and alternative respiration compensate for NADH dehydrogenase deficiency in a prokaryotic model of DJ-1 associated parkinsonism.</title>
        <authorList>
            <person name="Messaoudi N."/>
            <person name="Gautier V."/>
            <person name="Dairou J."/>
            <person name="Mihoub M."/>
            <person name="Lelandais G."/>
            <person name="Bouloc P."/>
            <person name="Landoulsi A."/>
            <person name="Richarme G."/>
        </authorList>
    </citation>
    <scope>DISRUPTION PHENOTYPE</scope>
</reference>
<reference key="12">
    <citation type="journal article" date="2016" name="Biochem. Biophys. Res. Commun.">
        <title>The DJ-1 superfamily members YhbO and YajL from Escherichia coli repair proteins from glycation by methylglyoxal and glyoxal.</title>
        <authorList>
            <person name="Abdallah J."/>
            <person name="Mihoub M."/>
            <person name="Gautier V."/>
            <person name="Richarme G."/>
        </authorList>
    </citation>
    <scope>FUNCTION AS A PROTEIN DEGLYCASE</scope>
    <scope>CATALYTIC ACTIVITY</scope>
    <scope>BIOPHYSICOCHEMICAL PROPERTIES</scope>
    <scope>DISRUPTION PHENOTYPE</scope>
    <source>
        <strain>K12 / MG1655 / ATCC 47076</strain>
    </source>
</reference>
<reference key="13">
    <citation type="journal article" date="2016" name="FEMS Microbiol. Lett.">
        <title>Characterization of the Escherichia coli YajL, YhbO and ElbB glyoxalases.</title>
        <authorList>
            <person name="Lee C."/>
            <person name="Lee J."/>
            <person name="Lee J.Y."/>
            <person name="Park C."/>
        </authorList>
    </citation>
    <scope>FUNCTION AS A GLYOXALASE</scope>
    <scope>BIOPHYSICOCHEMICAL PROPERTIES</scope>
    <scope>ACTIVITY REGULATION</scope>
    <source>
        <strain>K12 / MG1655 / ATCC 47076</strain>
    </source>
</reference>
<reference key="14">
    <citation type="journal article" date="2017" name="Science">
        <title>Guanine glycation repair by DJ-1/Park7 and its bacterial homologs.</title>
        <authorList>
            <person name="Richarme G."/>
            <person name="Liu C."/>
            <person name="Mihoub M."/>
            <person name="Abdallah J."/>
            <person name="Leger T."/>
            <person name="Joly N."/>
            <person name="Liebart J.C."/>
            <person name="Jurkunas U.V."/>
            <person name="Nadal M."/>
            <person name="Bouloc P."/>
            <person name="Dairou J."/>
            <person name="Lamouri A."/>
        </authorList>
    </citation>
    <scope>FUNCTION AS A NUCLEOTIDE DEGLYCASE</scope>
    <scope>CATALYTIC ACTIVITY</scope>
    <scope>DISRUPTION PHENOTYPE</scope>
    <source>
        <strain>K12 / BW25113</strain>
    </source>
</reference>
<reference evidence="15" key="15">
    <citation type="journal article" date="2005" name="J. Mol. Biol.">
        <title>The atomic resolution crystal structure of the YajL (ThiJ) protein from Escherichia coli: a close prokaryotic homologue of the Parkinsonism-associated protein DJ-1.</title>
        <authorList>
            <person name="Wilson M.A."/>
            <person name="Ringe D."/>
            <person name="Petsko G.A."/>
        </authorList>
    </citation>
    <scope>X-RAY CRYSTALLOGRAPHY (1.1 ANGSTROMS)</scope>
    <scope>OXIDATION AT CYS-106</scope>
    <scope>SUBUNIT</scope>
</reference>
<reference key="16">
    <citation type="journal article" date="2017" name="Biochemistry">
        <title>Short carboxylic acid-carboxylate hydrogen bonds can have fully localized protons.</title>
        <authorList>
            <person name="Lin J."/>
            <person name="Pozharski E."/>
            <person name="Wilson M.A."/>
        </authorList>
    </citation>
    <scope>X-RAY CRYSTALLOGRAPHY (0.98 ANGSTROMS)</scope>
</reference>
<protein>
    <recommendedName>
        <fullName evidence="13 14">Protein/nucleic acid deglycase 3</fullName>
        <ecNumber evidence="9">3.1.2.-</ecNumber>
        <ecNumber evidence="10">3.5.1.-</ecNumber>
        <ecNumber evidence="9">3.5.1.124</ecNumber>
    </recommendedName>
    <alternativeName>
        <fullName>Chaperone protein YajL</fullName>
    </alternativeName>
    <alternativeName>
        <fullName evidence="11">Maillard deglycase</fullName>
    </alternativeName>
</protein>
<sequence>MSASALVCLAPGSEETEAVTTIDLLVRGGIKVTTASVASDGNLAITCSRGVKLLADAPLVEVADGEYDVIVLPGGIKGAECFRDSTLLVETVKQFHRSGRIVAAICAAPATVLVPHDIFPIGNMTGFPTLKDKIPAEQWLDKRVVWDARVKLLTSQGPGTAIDFGLKIIDLLVGREKAHEVASQLVMAAGIYNYYE</sequence>
<proteinExistence type="evidence at protein level"/>
<feature type="chain" id="PRO_0000157829" description="Protein/nucleic acid deglycase 3">
    <location>
        <begin position="1"/>
        <end position="196"/>
    </location>
</feature>
<feature type="active site" description="Nucleophile" evidence="12">
    <location>
        <position position="106"/>
    </location>
</feature>
<feature type="modified residue" description="Cysteine sulfinic acid (-SO2H); alternate" evidence="1">
    <location>
        <position position="106"/>
    </location>
</feature>
<feature type="mutagenesis site" description="Is not impaired in the formation of mixed disulfide with a sulfenylated protein. Has a monomeric quaternary structure." evidence="4 5">
    <original>C</original>
    <variation>A</variation>
    <location>
        <position position="47"/>
    </location>
</feature>
<feature type="mutagenesis site" description="Is impaired in the formation of mixed disulfide with cytoplasmic and sulfenylated proteins. Does not complement a disruption mutant." evidence="2 4 5">
    <original>C</original>
    <variation>A</variation>
    <location>
        <position position="106"/>
    </location>
</feature>
<feature type="mutagenesis site" description="Does not complement a disruption mutant." evidence="2">
    <original>C</original>
    <variation>D</variation>
    <location>
        <position position="106"/>
    </location>
</feature>
<feature type="strand" evidence="17">
    <location>
        <begin position="4"/>
        <end position="9"/>
    </location>
</feature>
<feature type="helix" evidence="17">
    <location>
        <begin position="15"/>
        <end position="27"/>
    </location>
</feature>
<feature type="strand" evidence="17">
    <location>
        <begin position="31"/>
        <end position="36"/>
    </location>
</feature>
<feature type="strand" evidence="17">
    <location>
        <begin position="44"/>
        <end position="46"/>
    </location>
</feature>
<feature type="strand" evidence="17">
    <location>
        <begin position="52"/>
        <end position="54"/>
    </location>
</feature>
<feature type="strand" evidence="17">
    <location>
        <begin position="56"/>
        <end position="58"/>
    </location>
</feature>
<feature type="helix" evidence="17">
    <location>
        <begin position="59"/>
        <end position="62"/>
    </location>
</feature>
<feature type="strand" evidence="17">
    <location>
        <begin position="68"/>
        <end position="72"/>
    </location>
</feature>
<feature type="helix" evidence="17">
    <location>
        <begin position="76"/>
        <end position="84"/>
    </location>
</feature>
<feature type="helix" evidence="17">
    <location>
        <begin position="86"/>
        <end position="97"/>
    </location>
</feature>
<feature type="strand" evidence="17">
    <location>
        <begin position="101"/>
        <end position="105"/>
    </location>
</feature>
<feature type="helix" evidence="17">
    <location>
        <begin position="108"/>
        <end position="112"/>
    </location>
</feature>
<feature type="turn" evidence="17">
    <location>
        <begin position="113"/>
        <end position="117"/>
    </location>
</feature>
<feature type="strand" evidence="16">
    <location>
        <begin position="118"/>
        <end position="122"/>
    </location>
</feature>
<feature type="helix" evidence="17">
    <location>
        <begin position="128"/>
        <end position="133"/>
    </location>
</feature>
<feature type="turn" evidence="17">
    <location>
        <begin position="136"/>
        <end position="138"/>
    </location>
</feature>
<feature type="strand" evidence="17">
    <location>
        <begin position="142"/>
        <end position="147"/>
    </location>
</feature>
<feature type="turn" evidence="17">
    <location>
        <begin position="148"/>
        <end position="151"/>
    </location>
</feature>
<feature type="strand" evidence="17">
    <location>
        <begin position="152"/>
        <end position="155"/>
    </location>
</feature>
<feature type="helix" evidence="17">
    <location>
        <begin position="158"/>
        <end position="160"/>
    </location>
</feature>
<feature type="helix" evidence="17">
    <location>
        <begin position="161"/>
        <end position="172"/>
    </location>
</feature>
<feature type="helix" evidence="17">
    <location>
        <begin position="175"/>
        <end position="183"/>
    </location>
</feature>
<gene>
    <name type="primary">yajL</name>
    <name type="synonym">thiJ</name>
    <name type="ordered locus">b0424</name>
    <name type="ordered locus">JW5057</name>
</gene>
<accession>Q46948</accession>
<accession>Q2MC02</accession>
<dbReference type="EC" id="3.1.2.-" evidence="9"/>
<dbReference type="EC" id="3.5.1.-" evidence="10"/>
<dbReference type="EC" id="3.5.1.124" evidence="9"/>
<dbReference type="EMBL" id="U34923">
    <property type="protein sequence ID" value="AAA82704.1"/>
    <property type="status" value="ALT_INIT"/>
    <property type="molecule type" value="Genomic_DNA"/>
</dbReference>
<dbReference type="EMBL" id="U82664">
    <property type="protein sequence ID" value="AAB40180.1"/>
    <property type="status" value="ALT_INIT"/>
    <property type="molecule type" value="Genomic_DNA"/>
</dbReference>
<dbReference type="EMBL" id="U00096">
    <property type="protein sequence ID" value="AAC73527.2"/>
    <property type="molecule type" value="Genomic_DNA"/>
</dbReference>
<dbReference type="EMBL" id="AP009048">
    <property type="protein sequence ID" value="BAE76204.1"/>
    <property type="molecule type" value="Genomic_DNA"/>
</dbReference>
<dbReference type="PIR" id="H64771">
    <property type="entry name" value="H64771"/>
</dbReference>
<dbReference type="RefSeq" id="NP_414958.4">
    <property type="nucleotide sequence ID" value="NC_000913.3"/>
</dbReference>
<dbReference type="RefSeq" id="WP_001276305.1">
    <property type="nucleotide sequence ID" value="NZ_LN832404.1"/>
</dbReference>
<dbReference type="PDB" id="2AB0">
    <property type="method" value="X-ray"/>
    <property type="resolution" value="1.10 A"/>
    <property type="chains" value="A/B=1-196"/>
</dbReference>
<dbReference type="PDB" id="5SY4">
    <property type="method" value="X-ray"/>
    <property type="resolution" value="0.98 A"/>
    <property type="chains" value="A/B=1-196"/>
</dbReference>
<dbReference type="PDBsum" id="2AB0"/>
<dbReference type="PDBsum" id="5SY4"/>
<dbReference type="SMR" id="Q46948"/>
<dbReference type="BioGRID" id="4263345">
    <property type="interactions" value="21"/>
</dbReference>
<dbReference type="BioGRID" id="849455">
    <property type="interactions" value="59"/>
</dbReference>
<dbReference type="FunCoup" id="Q46948">
    <property type="interactions" value="516"/>
</dbReference>
<dbReference type="IntAct" id="Q46948">
    <property type="interactions" value="17"/>
</dbReference>
<dbReference type="STRING" id="511145.b0424"/>
<dbReference type="jPOST" id="Q46948"/>
<dbReference type="PaxDb" id="511145-b0424"/>
<dbReference type="EnsemblBacteria" id="AAC73527">
    <property type="protein sequence ID" value="AAC73527"/>
    <property type="gene ID" value="b0424"/>
</dbReference>
<dbReference type="GeneID" id="945066"/>
<dbReference type="KEGG" id="ecj:JW5057"/>
<dbReference type="KEGG" id="eco:b0424"/>
<dbReference type="KEGG" id="ecoc:C3026_02070"/>
<dbReference type="PATRIC" id="fig|1411691.4.peg.1853"/>
<dbReference type="EchoBASE" id="EB3057"/>
<dbReference type="eggNOG" id="COG0693">
    <property type="taxonomic scope" value="Bacteria"/>
</dbReference>
<dbReference type="HOGENOM" id="CLU_000445_44_2_6"/>
<dbReference type="InParanoid" id="Q46948"/>
<dbReference type="OMA" id="KATCYPG"/>
<dbReference type="OrthoDB" id="9803764at2"/>
<dbReference type="PhylomeDB" id="Q46948"/>
<dbReference type="BioCyc" id="EcoCyc:HMP-KIN-MONOMER"/>
<dbReference type="BioCyc" id="MetaCyc:HMP-KIN-MONOMER"/>
<dbReference type="BRENDA" id="3.5.1.124">
    <property type="organism ID" value="2026"/>
</dbReference>
<dbReference type="BRENDA" id="4.2.1.130">
    <property type="organism ID" value="2026"/>
</dbReference>
<dbReference type="EvolutionaryTrace" id="Q46948"/>
<dbReference type="PRO" id="PR:Q46948"/>
<dbReference type="Proteomes" id="UP000000625">
    <property type="component" value="Chromosome"/>
</dbReference>
<dbReference type="GO" id="GO:0005737">
    <property type="term" value="C:cytoplasm"/>
    <property type="evidence" value="ECO:0000318"/>
    <property type="project" value="GO_Central"/>
</dbReference>
<dbReference type="GO" id="GO:0005829">
    <property type="term" value="C:cytosol"/>
    <property type="evidence" value="ECO:0000314"/>
    <property type="project" value="EcoCyc"/>
</dbReference>
<dbReference type="GO" id="GO:0036524">
    <property type="term" value="F:protein deglycase activity"/>
    <property type="evidence" value="ECO:0000314"/>
    <property type="project" value="EcoCyc"/>
</dbReference>
<dbReference type="GO" id="GO:0042803">
    <property type="term" value="F:protein homodimerization activity"/>
    <property type="evidence" value="ECO:0000314"/>
    <property type="project" value="EcoCyc"/>
</dbReference>
<dbReference type="GO" id="GO:0034599">
    <property type="term" value="P:cellular response to oxidative stress"/>
    <property type="evidence" value="ECO:0000315"/>
    <property type="project" value="UniProtKB"/>
</dbReference>
<dbReference type="GO" id="GO:0006281">
    <property type="term" value="P:DNA repair"/>
    <property type="evidence" value="ECO:0007669"/>
    <property type="project" value="UniProtKB-KW"/>
</dbReference>
<dbReference type="GO" id="GO:0042026">
    <property type="term" value="P:protein refolding"/>
    <property type="evidence" value="ECO:0000314"/>
    <property type="project" value="EcoCyc"/>
</dbReference>
<dbReference type="GO" id="GO:0030091">
    <property type="term" value="P:protein repair"/>
    <property type="evidence" value="ECO:0000314"/>
    <property type="project" value="EcoCyc"/>
</dbReference>
<dbReference type="GO" id="GO:0009408">
    <property type="term" value="P:response to heat"/>
    <property type="evidence" value="ECO:0000315"/>
    <property type="project" value="EcoCyc"/>
</dbReference>
<dbReference type="GO" id="GO:0042254">
    <property type="term" value="P:ribosome biogenesis"/>
    <property type="evidence" value="ECO:0000315"/>
    <property type="project" value="UniProtKB"/>
</dbReference>
<dbReference type="CDD" id="cd03135">
    <property type="entry name" value="GATase1_DJ-1"/>
    <property type="match status" value="1"/>
</dbReference>
<dbReference type="FunFam" id="3.40.50.880:FF:000037">
    <property type="entry name" value="DJ-1 family protein"/>
    <property type="match status" value="1"/>
</dbReference>
<dbReference type="Gene3D" id="3.40.50.880">
    <property type="match status" value="1"/>
</dbReference>
<dbReference type="InterPro" id="IPR029062">
    <property type="entry name" value="Class_I_gatase-like"/>
</dbReference>
<dbReference type="InterPro" id="IPR006287">
    <property type="entry name" value="DJ-1"/>
</dbReference>
<dbReference type="InterPro" id="IPR002818">
    <property type="entry name" value="DJ-1/PfpI"/>
</dbReference>
<dbReference type="InterPro" id="IPR050325">
    <property type="entry name" value="Prot/Nucl_acid_deglycase"/>
</dbReference>
<dbReference type="NCBIfam" id="TIGR01383">
    <property type="entry name" value="not_thiJ"/>
    <property type="match status" value="1"/>
</dbReference>
<dbReference type="NCBIfam" id="NF008605">
    <property type="entry name" value="PRK11574.1"/>
    <property type="match status" value="1"/>
</dbReference>
<dbReference type="PANTHER" id="PTHR48094">
    <property type="entry name" value="PROTEIN/NUCLEIC ACID DEGLYCASE DJ-1-RELATED"/>
    <property type="match status" value="1"/>
</dbReference>
<dbReference type="PANTHER" id="PTHR48094:SF23">
    <property type="entry name" value="PROTEIN_NUCLEIC ACID DEGLYCASE 3"/>
    <property type="match status" value="1"/>
</dbReference>
<dbReference type="Pfam" id="PF01965">
    <property type="entry name" value="DJ-1_PfpI"/>
    <property type="match status" value="1"/>
</dbReference>
<dbReference type="SUPFAM" id="SSF52317">
    <property type="entry name" value="Class I glutamine amidotransferase-like"/>
    <property type="match status" value="1"/>
</dbReference>
<comment type="function">
    <text evidence="2 3 4 5 6 8 9 10">Protein and nucleotide deglycase that catalyzes the deglycation of the Maillard adducts formed between amino groups of proteins or nucleotides and reactive carbonyl groups of glyoxals (PubMed:26774339, PubMed:28596309). Thus, functions as a protein deglycase that repairs methylglyoxal- and glyoxal-glycated proteins, and releases repaired proteins and lactate or glycolate, respectively. Deglycates cysteine, arginine and lysine residues in proteins, and thus reactivates these proteins by reversing glycation by glyoxals. Is able to repair glycated serum albumin, collagen, glyceraldehyde-3-phosphate dehydrogenase, and fructose biphosphate aldolase. Acts on early glycation intermediates (hemithioacetals and aminocarbinols), preventing the formation of Schiff bases and advanced glycation endproducts (AGE) that cause irreversible damage (PubMed:25416785, PubMed:26774339). Also functions as a nucleotide deglycase able to repair glycated guanine in the free nucleotide pool (GTP, GDP, GMP, dGTP) and in DNA and RNA. Is thus involved in a major nucleotide repair system named guanine glycation repair (GG repair), dedicated to reversing methylglyoxal and glyoxal damage via nucleotide sanitization and direct nucleic acid repair. However, is less efficient than Hsp31 and YhbO, suggesting that YajL might be preferentially dedicated to protein repair (PubMed:28596309). Displays a covalent chaperone activity with sulfenylated thiol proteins by forming mixed disulfides with members of the thiol proteome, and preferentially with sulfenylated cellular proteins, upon oxidative stress; these mixed disulfides can be subsequently reduced by low-molecular-weight thiols to regenerate YajL and reduced proteins (PubMed:22157000, PubMed:22321799). Involved in biogenesis of ribosomal proteins, probably as a ribosomal protein-folding chaperone (PubMed:20889753). Confers resistance to oxidative stress (PubMed:20124404, PubMed:22157000, PubMed:22321799). Plays an important role in protection against electrophile/carbonyl stress (PubMed:26774339). The chaperone activity reported for YajL is probably recruited to execute its deglycase activity, to interact with non-native glycated proteins and gain access to partially buried glycated sites (PubMed:25416785, PubMed:26774339). Also displays an apparent glyoxalase activity that in fact reflects its deglycase activity (PubMed:26678554, PubMed:26774339).</text>
</comment>
<comment type="catalytic activity">
    <reaction evidence="13">
        <text>N(omega)-(1-hydroxy-2-oxopropyl)-L-arginyl-[protein] + H2O = lactate + L-arginyl-[protein] + H(+)</text>
        <dbReference type="Rhea" id="RHEA:49548"/>
        <dbReference type="Rhea" id="RHEA-COMP:10532"/>
        <dbReference type="Rhea" id="RHEA-COMP:12428"/>
        <dbReference type="ChEBI" id="CHEBI:15377"/>
        <dbReference type="ChEBI" id="CHEBI:15378"/>
        <dbReference type="ChEBI" id="CHEBI:24996"/>
        <dbReference type="ChEBI" id="CHEBI:29965"/>
        <dbReference type="ChEBI" id="CHEBI:131708"/>
        <dbReference type="EC" id="3.5.1.124"/>
    </reaction>
</comment>
<comment type="catalytic activity">
    <reaction evidence="9">
        <text>N(6)-(1-hydroxy-2-oxopropyl)-L-lysyl-[protein] + H2O = lactate + L-lysyl-[protein] + H(+)</text>
        <dbReference type="Rhea" id="RHEA:49552"/>
        <dbReference type="Rhea" id="RHEA-COMP:9752"/>
        <dbReference type="Rhea" id="RHEA-COMP:12429"/>
        <dbReference type="ChEBI" id="CHEBI:15377"/>
        <dbReference type="ChEBI" id="CHEBI:15378"/>
        <dbReference type="ChEBI" id="CHEBI:24996"/>
        <dbReference type="ChEBI" id="CHEBI:29969"/>
        <dbReference type="ChEBI" id="CHEBI:131709"/>
        <dbReference type="EC" id="3.5.1.124"/>
    </reaction>
</comment>
<comment type="catalytic activity">
    <reaction evidence="9">
        <text>S-(1-hydroxy-2-oxopropyl)-L-cysteinyl-[protein] + H2O = lactate + L-cysteinyl-[protein] + H(+)</text>
        <dbReference type="Rhea" id="RHEA:49556"/>
        <dbReference type="Rhea" id="RHEA-COMP:10131"/>
        <dbReference type="Rhea" id="RHEA-COMP:12430"/>
        <dbReference type="ChEBI" id="CHEBI:15377"/>
        <dbReference type="ChEBI" id="CHEBI:15378"/>
        <dbReference type="ChEBI" id="CHEBI:24996"/>
        <dbReference type="ChEBI" id="CHEBI:29950"/>
        <dbReference type="ChEBI" id="CHEBI:131710"/>
        <dbReference type="EC" id="3.5.1.124"/>
    </reaction>
</comment>
<comment type="catalytic activity">
    <reaction evidence="9">
        <text>N(omega)-(1-hydroxy-2-oxoethyl)-L-arginyl-[protein] + H2O = L-arginyl-[protein] + glycolate + H(+)</text>
        <dbReference type="Rhea" id="RHEA:57188"/>
        <dbReference type="Rhea" id="RHEA-COMP:10532"/>
        <dbReference type="Rhea" id="RHEA-COMP:14844"/>
        <dbReference type="ChEBI" id="CHEBI:15377"/>
        <dbReference type="ChEBI" id="CHEBI:15378"/>
        <dbReference type="ChEBI" id="CHEBI:29805"/>
        <dbReference type="ChEBI" id="CHEBI:29965"/>
        <dbReference type="ChEBI" id="CHEBI:141553"/>
        <dbReference type="EC" id="3.5.1.124"/>
    </reaction>
</comment>
<comment type="catalytic activity">
    <reaction evidence="9">
        <text>N(6)-(1-hydroxy-2-oxoethyl)-L-lysyl-[protein] + H2O = glycolate + L-lysyl-[protein] + H(+)</text>
        <dbReference type="Rhea" id="RHEA:57192"/>
        <dbReference type="Rhea" id="RHEA-COMP:9752"/>
        <dbReference type="Rhea" id="RHEA-COMP:14845"/>
        <dbReference type="ChEBI" id="CHEBI:15377"/>
        <dbReference type="ChEBI" id="CHEBI:15378"/>
        <dbReference type="ChEBI" id="CHEBI:29805"/>
        <dbReference type="ChEBI" id="CHEBI:29969"/>
        <dbReference type="ChEBI" id="CHEBI:141554"/>
        <dbReference type="EC" id="3.5.1.124"/>
    </reaction>
</comment>
<comment type="catalytic activity">
    <reaction evidence="13">
        <text>S-(1-hydroxy-2-oxoethyl)-L-cysteinyl-[protein] + H2O = glycolate + L-cysteinyl-[protein] + H(+)</text>
        <dbReference type="Rhea" id="RHEA:57196"/>
        <dbReference type="Rhea" id="RHEA-COMP:10131"/>
        <dbReference type="Rhea" id="RHEA-COMP:14846"/>
        <dbReference type="ChEBI" id="CHEBI:15377"/>
        <dbReference type="ChEBI" id="CHEBI:15378"/>
        <dbReference type="ChEBI" id="CHEBI:29805"/>
        <dbReference type="ChEBI" id="CHEBI:29950"/>
        <dbReference type="ChEBI" id="CHEBI:141555"/>
        <dbReference type="EC" id="3.5.1.124"/>
    </reaction>
</comment>
<comment type="catalytic activity">
    <reaction evidence="14">
        <text>N(2)-(1-hydroxy-2-oxopropyl)-dGTP + H2O = lactate + dGTP + H(+)</text>
        <dbReference type="Rhea" id="RHEA:57244"/>
        <dbReference type="ChEBI" id="CHEBI:15377"/>
        <dbReference type="ChEBI" id="CHEBI:15378"/>
        <dbReference type="ChEBI" id="CHEBI:24996"/>
        <dbReference type="ChEBI" id="CHEBI:61429"/>
        <dbReference type="ChEBI" id="CHEBI:141569"/>
    </reaction>
</comment>
<comment type="catalytic activity">
    <reaction evidence="10">
        <text>N(2)-(1-hydroxy-2-oxopropyl)-GTP + H2O = lactate + GTP + H(+)</text>
        <dbReference type="Rhea" id="RHEA:57256"/>
        <dbReference type="ChEBI" id="CHEBI:15377"/>
        <dbReference type="ChEBI" id="CHEBI:15378"/>
        <dbReference type="ChEBI" id="CHEBI:24996"/>
        <dbReference type="ChEBI" id="CHEBI:37565"/>
        <dbReference type="ChEBI" id="CHEBI:141570"/>
    </reaction>
</comment>
<comment type="catalytic activity">
    <reaction evidence="14">
        <text>N(2)-(1-hydroxy-2-oxopropyl)-GDP + H2O = lactate + GDP + H(+)</text>
        <dbReference type="Rhea" id="RHEA:57260"/>
        <dbReference type="ChEBI" id="CHEBI:15377"/>
        <dbReference type="ChEBI" id="CHEBI:15378"/>
        <dbReference type="ChEBI" id="CHEBI:24996"/>
        <dbReference type="ChEBI" id="CHEBI:58189"/>
        <dbReference type="ChEBI" id="CHEBI:141573"/>
    </reaction>
</comment>
<comment type="catalytic activity">
    <reaction evidence="14">
        <text>N(2)-(1-hydroxy-2-oxopropyl)-GMP + H2O = lactate + GMP + H(+)</text>
        <dbReference type="Rhea" id="RHEA:57268"/>
        <dbReference type="ChEBI" id="CHEBI:15377"/>
        <dbReference type="ChEBI" id="CHEBI:15378"/>
        <dbReference type="ChEBI" id="CHEBI:24996"/>
        <dbReference type="ChEBI" id="CHEBI:58115"/>
        <dbReference type="ChEBI" id="CHEBI:141575"/>
    </reaction>
</comment>
<comment type="catalytic activity">
    <reaction evidence="14">
        <text>N(2)-(1-hydroxy-2-oxoethyl)-dGTP + H2O = dGTP + glycolate + H(+)</text>
        <dbReference type="Rhea" id="RHEA:57248"/>
        <dbReference type="ChEBI" id="CHEBI:15377"/>
        <dbReference type="ChEBI" id="CHEBI:15378"/>
        <dbReference type="ChEBI" id="CHEBI:29805"/>
        <dbReference type="ChEBI" id="CHEBI:61429"/>
        <dbReference type="ChEBI" id="CHEBI:141572"/>
    </reaction>
</comment>
<comment type="catalytic activity">
    <reaction evidence="14">
        <text>N(2)-(1-hydroxy-2-oxoethyl)-GTP + H2O = glycolate + GTP + H(+)</text>
        <dbReference type="Rhea" id="RHEA:57252"/>
        <dbReference type="ChEBI" id="CHEBI:15377"/>
        <dbReference type="ChEBI" id="CHEBI:15378"/>
        <dbReference type="ChEBI" id="CHEBI:29805"/>
        <dbReference type="ChEBI" id="CHEBI:37565"/>
        <dbReference type="ChEBI" id="CHEBI:141571"/>
    </reaction>
</comment>
<comment type="catalytic activity">
    <reaction evidence="14">
        <text>N(2)-(1-hydroxy-2-oxoethyl)-GDP + H2O = glycolate + GDP + H(+)</text>
        <dbReference type="Rhea" id="RHEA:57264"/>
        <dbReference type="ChEBI" id="CHEBI:15377"/>
        <dbReference type="ChEBI" id="CHEBI:15378"/>
        <dbReference type="ChEBI" id="CHEBI:29805"/>
        <dbReference type="ChEBI" id="CHEBI:58189"/>
        <dbReference type="ChEBI" id="CHEBI:141574"/>
    </reaction>
</comment>
<comment type="catalytic activity">
    <reaction evidence="14">
        <text>N(2)-(1-hydroxy-2-oxoethyl)-GMP + H2O = glycolate + GMP + H(+)</text>
        <dbReference type="Rhea" id="RHEA:57304"/>
        <dbReference type="ChEBI" id="CHEBI:15377"/>
        <dbReference type="ChEBI" id="CHEBI:15378"/>
        <dbReference type="ChEBI" id="CHEBI:29805"/>
        <dbReference type="ChEBI" id="CHEBI:58115"/>
        <dbReference type="ChEBI" id="CHEBI:141576"/>
    </reaction>
</comment>
<comment type="catalytic activity">
    <reaction evidence="14">
        <text>an N(2)-(1-hydroxy-2-oxopropyl)-guanosine in RNA + H2O = a guanosine in RNA + lactate + H(+)</text>
        <dbReference type="Rhea" id="RHEA:57288"/>
        <dbReference type="Rhea" id="RHEA-COMP:14855"/>
        <dbReference type="Rhea" id="RHEA-COMP:14858"/>
        <dbReference type="ChEBI" id="CHEBI:15377"/>
        <dbReference type="ChEBI" id="CHEBI:15378"/>
        <dbReference type="ChEBI" id="CHEBI:24996"/>
        <dbReference type="ChEBI" id="CHEBI:74269"/>
        <dbReference type="ChEBI" id="CHEBI:141580"/>
    </reaction>
</comment>
<comment type="catalytic activity">
    <reaction evidence="14">
        <text>an N(2)-(1-hydroxy-2-oxopropyl)-2'-deoxyguanosine in DNA + H2O = a 2'-deoxyguanosine in DNA + lactate + H(+)</text>
        <dbReference type="Rhea" id="RHEA:57300"/>
        <dbReference type="Rhea" id="RHEA-COMP:11367"/>
        <dbReference type="Rhea" id="RHEA-COMP:14856"/>
        <dbReference type="ChEBI" id="CHEBI:15377"/>
        <dbReference type="ChEBI" id="CHEBI:15378"/>
        <dbReference type="ChEBI" id="CHEBI:24996"/>
        <dbReference type="ChEBI" id="CHEBI:85445"/>
        <dbReference type="ChEBI" id="CHEBI:141578"/>
    </reaction>
</comment>
<comment type="catalytic activity">
    <reaction evidence="14">
        <text>an N(2)-(1-hydroxy-2-oxoethyl)-guanosine in RNA + H2O = a guanosine in RNA + glycolate + H(+)</text>
        <dbReference type="Rhea" id="RHEA:57292"/>
        <dbReference type="Rhea" id="RHEA-COMP:14855"/>
        <dbReference type="Rhea" id="RHEA-COMP:14859"/>
        <dbReference type="ChEBI" id="CHEBI:15377"/>
        <dbReference type="ChEBI" id="CHEBI:15378"/>
        <dbReference type="ChEBI" id="CHEBI:29805"/>
        <dbReference type="ChEBI" id="CHEBI:74269"/>
        <dbReference type="ChEBI" id="CHEBI:141581"/>
    </reaction>
</comment>
<comment type="catalytic activity">
    <reaction evidence="14">
        <text>an N(2)-(1-hydroxy-2-oxoethyl)-2'-deoxyguanosine in DNA + H2O = a 2'-deoxyguanosine in DNA + glycolate + H(+)</text>
        <dbReference type="Rhea" id="RHEA:57296"/>
        <dbReference type="Rhea" id="RHEA-COMP:11367"/>
        <dbReference type="Rhea" id="RHEA-COMP:14857"/>
        <dbReference type="ChEBI" id="CHEBI:15377"/>
        <dbReference type="ChEBI" id="CHEBI:15378"/>
        <dbReference type="ChEBI" id="CHEBI:29805"/>
        <dbReference type="ChEBI" id="CHEBI:85445"/>
        <dbReference type="ChEBI" id="CHEBI:141579"/>
    </reaction>
</comment>
<comment type="activity regulation">
    <text evidence="2 8">Glyoxalase activity is inhibited by zinc ions (PubMed:26678554). Active as a chaperone in both its reduced and oxidized states, and is more active in its oxidized form (PubMed:20124404).</text>
</comment>
<comment type="biophysicochemical properties">
    <kinetics>
        <KM evidence="8">2.97 mM for glyoxal (at pH 7.4 and 37 degrees Celsius)</KM>
        <text evidence="8 9">kcat is 70.32 min(-1) for glyoxalase activity with glyoxal as substrate (at pH 7.4 and 37 degrees Celsius) (PubMed:26678554). The apparent kcat of methylglyoxal and glyoxal degradation is 0.08 sec(-1), and 0.15 sec(-1), respectively (at 22 degrees Celsius) (PubMed:26774339).</text>
    </kinetics>
</comment>
<comment type="subunit">
    <text evidence="1 4">Homodimer.</text>
</comment>
<comment type="PTM">
    <text evidence="1">Cys-106 is easily oxidized to sulfinic acid.</text>
</comment>
<comment type="disruption phenotype">
    <text evidence="2 3 5 6 7 9 10">Cells lacking this gene display highest sensitivity to carbonyl stress. The yajL mutant (but not the parental strain) suffers from a 100-fold decrease in viability after incubation for 48 hours in LB medium containing 0.6% glucose, and the mutant is rescued by YajL- and DJ-1-overproducing plasmids. The wild-type strain displays a small quantity of glycated proteins after overnight culture in LB medium supplemented with 0.6% glucose, whereas the yajL mutant displays much higher levels of glycated proteins (PubMed:25416785, PubMed:26774339), and also higher DNA and RNA glycation levels (PubMed:28596309). Moreover, the double and triple mutants lacking yhbO and yajL, and yhbO, yajL and hchA, respectively, display impressive amounts of glycated proteins, suggesting that the YhbO, YajL and Hsp31 deglycases display relatively redundant functions (PubMed:26774339). The triple mutant displays higher glycation levels of free nucleotides (GTP and dGTP) than the parental strain, and shows higher glycation levels of DNA and RNA than those of single mutants (PubMed:28596309). The yajL mutant cells display decreased viability in methylglyoxal- or glucose-containing media (PubMed:26774339). They also display increased protein sulfenic acids levels, both before and after oxidative stress, but similar protein disulfides levels (PubMed:22321799). In aerobiosis, mutants show a protein aggregation phenotype, which is increased by oxidative stress (PubMed:20124404). Mutants show also altered gene expression and display decreased translation accuracy (PubMed:20889753). The yajL deletion mutant shows a negligible NADH dehydrogenase 1 activity and compensates for this low activity by utilizing NADH-independent alternative dehydrogenases, including pyruvate oxidase PoxB and D-aminoacid dehydrogenase DadA, and mixed acid aerobic fermentations characterized by acetate, lactate, succinate and ethanol excretion (PubMed:26377309). It shows up-regulation of genes involved in glycolytic and pentose phosphate pathways and alternative respiratory pathways (PubMed:26377309). Moreover, the yajL mutant preferentially catabolizes pyruvate-forming amino acids over Krebs cycle-related ones, and thus it utilizes pyruvate-centred respiro-fermentative metabolism to compensate for the NADH dehydrogenase 1 defect (PubMed:26377309).</text>
</comment>
<comment type="similarity">
    <text evidence="12">Belongs to the peptidase C56 family.</text>
</comment>
<comment type="caution">
    <text evidence="12">Was originally (Ref.1) thought to be involved in thiamine biosynthesis. However, this phenotype was probably due to an artifactual recombination event involving a portion of the adjacent thiI gene.</text>
</comment>
<comment type="caution">
    <text evidence="12">The protein deglycation activity has been ascribed to a TRIS buffer artifact by a publication (PubMed:27903648), which has then been rebutted by clear biochemical experiments showing that DJ-1 family deglycases are bona fide deglycases (PubMed:28013050). Deglycase activity is even strengthened by a novel article that reports nucleotide deglycation activity (PubMed:28596309).</text>
</comment>
<comment type="sequence caution" evidence="12">
    <conflict type="erroneous initiation">
        <sequence resource="EMBL-CDS" id="AAA82704"/>
    </conflict>
    <text>Extended N-terminus.</text>
</comment>
<comment type="sequence caution" evidence="12">
    <conflict type="erroneous initiation">
        <sequence resource="EMBL-CDS" id="AAB40180"/>
    </conflict>
    <text>Extended N-terminus.</text>
</comment>
<keyword id="KW-0002">3D-structure</keyword>
<keyword id="KW-0143">Chaperone</keyword>
<keyword id="KW-0227">DNA damage</keyword>
<keyword id="KW-0234">DNA repair</keyword>
<keyword id="KW-0378">Hydrolase</keyword>
<keyword id="KW-0558">Oxidation</keyword>
<keyword id="KW-1185">Reference proteome</keyword>
<keyword id="KW-0346">Stress response</keyword>
<evidence type="ECO:0000269" key="1">
    <source>
    </source>
</evidence>
<evidence type="ECO:0000269" key="2">
    <source>
    </source>
</evidence>
<evidence type="ECO:0000269" key="3">
    <source>
    </source>
</evidence>
<evidence type="ECO:0000269" key="4">
    <source>
    </source>
</evidence>
<evidence type="ECO:0000269" key="5">
    <source>
    </source>
</evidence>
<evidence type="ECO:0000269" key="6">
    <source>
    </source>
</evidence>
<evidence type="ECO:0000269" key="7">
    <source>
    </source>
</evidence>
<evidence type="ECO:0000269" key="8">
    <source>
    </source>
</evidence>
<evidence type="ECO:0000269" key="9">
    <source>
    </source>
</evidence>
<evidence type="ECO:0000269" key="10">
    <source>
    </source>
</evidence>
<evidence type="ECO:0000303" key="11">
    <source>
    </source>
</evidence>
<evidence type="ECO:0000305" key="12"/>
<evidence type="ECO:0000305" key="13">
    <source>
    </source>
</evidence>
<evidence type="ECO:0000305" key="14">
    <source>
    </source>
</evidence>
<evidence type="ECO:0007744" key="15">
    <source>
        <dbReference type="PDB" id="2AB0"/>
    </source>
</evidence>
<evidence type="ECO:0007829" key="16">
    <source>
        <dbReference type="PDB" id="2AB0"/>
    </source>
</evidence>
<evidence type="ECO:0007829" key="17">
    <source>
        <dbReference type="PDB" id="5SY4"/>
    </source>
</evidence>
<organism>
    <name type="scientific">Escherichia coli (strain K12)</name>
    <dbReference type="NCBI Taxonomy" id="83333"/>
    <lineage>
        <taxon>Bacteria</taxon>
        <taxon>Pseudomonadati</taxon>
        <taxon>Pseudomonadota</taxon>
        <taxon>Gammaproteobacteria</taxon>
        <taxon>Enterobacterales</taxon>
        <taxon>Enterobacteriaceae</taxon>
        <taxon>Escherichia</taxon>
    </lineage>
</organism>
<name>YAJL_ECOLI</name>